<evidence type="ECO:0000255" key="1">
    <source>
        <dbReference type="HAMAP-Rule" id="MF_01693"/>
    </source>
</evidence>
<reference key="1">
    <citation type="journal article" date="2006" name="Nat. Biotechnol.">
        <title>Genome sequence of the ubiquitous hydrocarbon-degrading marine bacterium Alcanivorax borkumensis.</title>
        <authorList>
            <person name="Schneiker S."/>
            <person name="Martins dos Santos V.A.P."/>
            <person name="Bartels D."/>
            <person name="Bekel T."/>
            <person name="Brecht M."/>
            <person name="Buhrmester J."/>
            <person name="Chernikova T.N."/>
            <person name="Denaro R."/>
            <person name="Ferrer M."/>
            <person name="Gertler C."/>
            <person name="Goesmann A."/>
            <person name="Golyshina O.V."/>
            <person name="Kaminski F."/>
            <person name="Khachane A.N."/>
            <person name="Lang S."/>
            <person name="Linke B."/>
            <person name="McHardy A.C."/>
            <person name="Meyer F."/>
            <person name="Nechitaylo T."/>
            <person name="Puehler A."/>
            <person name="Regenhardt D."/>
            <person name="Rupp O."/>
            <person name="Sabirova J.S."/>
            <person name="Selbitschka W."/>
            <person name="Yakimov M.M."/>
            <person name="Timmis K.N."/>
            <person name="Vorhoelter F.-J."/>
            <person name="Weidner S."/>
            <person name="Kaiser O."/>
            <person name="Golyshin P.N."/>
        </authorList>
    </citation>
    <scope>NUCLEOTIDE SEQUENCE [LARGE SCALE GENOMIC DNA]</scope>
    <source>
        <strain>ATCC 700651 / DSM 11573 / NCIMB 13689 / SK2</strain>
    </source>
</reference>
<feature type="chain" id="PRO_0000380889" description="8-amino-7-oxononanoate synthase">
    <location>
        <begin position="1"/>
        <end position="386"/>
    </location>
</feature>
<feature type="binding site" evidence="1">
    <location>
        <position position="19"/>
    </location>
    <ligand>
        <name>substrate</name>
    </ligand>
</feature>
<feature type="binding site" evidence="1">
    <location>
        <begin position="106"/>
        <end position="107"/>
    </location>
    <ligand>
        <name>pyridoxal 5'-phosphate</name>
        <dbReference type="ChEBI" id="CHEBI:597326"/>
    </ligand>
</feature>
<feature type="binding site" evidence="1">
    <location>
        <position position="131"/>
    </location>
    <ligand>
        <name>substrate</name>
    </ligand>
</feature>
<feature type="binding site" evidence="1">
    <location>
        <position position="177"/>
    </location>
    <ligand>
        <name>pyridoxal 5'-phosphate</name>
        <dbReference type="ChEBI" id="CHEBI:597326"/>
    </ligand>
</feature>
<feature type="binding site" evidence="1">
    <location>
        <position position="205"/>
    </location>
    <ligand>
        <name>pyridoxal 5'-phosphate</name>
        <dbReference type="ChEBI" id="CHEBI:597326"/>
    </ligand>
</feature>
<feature type="binding site" evidence="1">
    <location>
        <position position="233"/>
    </location>
    <ligand>
        <name>pyridoxal 5'-phosphate</name>
        <dbReference type="ChEBI" id="CHEBI:597326"/>
    </ligand>
</feature>
<feature type="binding site" evidence="1">
    <location>
        <position position="350"/>
    </location>
    <ligand>
        <name>substrate</name>
    </ligand>
</feature>
<feature type="modified residue" description="N6-(pyridoxal phosphate)lysine" evidence="1">
    <location>
        <position position="236"/>
    </location>
</feature>
<name>BIOF_ALCBS</name>
<comment type="function">
    <text evidence="1">Catalyzes the decarboxylative condensation of pimeloyl-[acyl-carrier protein] and L-alanine to produce 8-amino-7-oxononanoate (AON), [acyl-carrier protein], and carbon dioxide.</text>
</comment>
<comment type="catalytic activity">
    <reaction evidence="1">
        <text>6-carboxyhexanoyl-[ACP] + L-alanine + H(+) = (8S)-8-amino-7-oxononanoate + holo-[ACP] + CO2</text>
        <dbReference type="Rhea" id="RHEA:42288"/>
        <dbReference type="Rhea" id="RHEA-COMP:9685"/>
        <dbReference type="Rhea" id="RHEA-COMP:9955"/>
        <dbReference type="ChEBI" id="CHEBI:15378"/>
        <dbReference type="ChEBI" id="CHEBI:16526"/>
        <dbReference type="ChEBI" id="CHEBI:57972"/>
        <dbReference type="ChEBI" id="CHEBI:64479"/>
        <dbReference type="ChEBI" id="CHEBI:78846"/>
        <dbReference type="ChEBI" id="CHEBI:149468"/>
        <dbReference type="EC" id="2.3.1.47"/>
    </reaction>
</comment>
<comment type="cofactor">
    <cofactor evidence="1">
        <name>pyridoxal 5'-phosphate</name>
        <dbReference type="ChEBI" id="CHEBI:597326"/>
    </cofactor>
</comment>
<comment type="pathway">
    <text evidence="1">Cofactor biosynthesis; biotin biosynthesis.</text>
</comment>
<comment type="subunit">
    <text evidence="1">Homodimer.</text>
</comment>
<comment type="similarity">
    <text evidence="1">Belongs to the class-II pyridoxal-phosphate-dependent aminotransferase family. BioF subfamily.</text>
</comment>
<gene>
    <name evidence="1" type="primary">bioF</name>
    <name type="ordered locus">ABO_2219</name>
</gene>
<protein>
    <recommendedName>
        <fullName evidence="1">8-amino-7-oxononanoate synthase</fullName>
        <shortName evidence="1">AONS</shortName>
        <ecNumber evidence="1">2.3.1.47</ecNumber>
    </recommendedName>
    <alternativeName>
        <fullName evidence="1">7-keto-8-amino-pelargonic acid synthase</fullName>
        <shortName evidence="1">7-KAP synthase</shortName>
        <shortName evidence="1">KAPA synthase</shortName>
    </alternativeName>
    <alternativeName>
        <fullName evidence="1">8-amino-7-ketopelargonate synthase</fullName>
    </alternativeName>
</protein>
<sequence>MGFDLATDLAARRRQHRYRQARIMDGPSGRHALLGGRQYLNFCSNDYLGLANDPAVVAAFQQGAADWGVGSGASHLVCGHQRPHQQLEEALAAHTGRQRALLFSTGYMANLGVMTALLSKGDAVFQDRLNHASLLDGGLLSGARFRRFPHNDGQALASQLARSEARRKLVVVDGVFSMDGDEAPLVDYAEACEGHDAWLMVDDAHGIGVLDAQGRGSVFTQGVNERVPVLMGTLGKGLGTAGAFVAGSDELIETLIQFARTFIYTTAMPAAVASATLVSLRKSREENWRRDTLAELIARFRQGARALGYTLMPSQTPIQPLLIGSDVDATALSEALREKGFLITAIRPPTVREGEARLRVTLSAAHEVEDVDALLAALAQCQTQDV</sequence>
<organism>
    <name type="scientific">Alcanivorax borkumensis (strain ATCC 700651 / DSM 11573 / NCIMB 13689 / SK2)</name>
    <dbReference type="NCBI Taxonomy" id="393595"/>
    <lineage>
        <taxon>Bacteria</taxon>
        <taxon>Pseudomonadati</taxon>
        <taxon>Pseudomonadota</taxon>
        <taxon>Gammaproteobacteria</taxon>
        <taxon>Oceanospirillales</taxon>
        <taxon>Alcanivoracaceae</taxon>
        <taxon>Alcanivorax</taxon>
    </lineage>
</organism>
<keyword id="KW-0093">Biotin biosynthesis</keyword>
<keyword id="KW-0663">Pyridoxal phosphate</keyword>
<keyword id="KW-1185">Reference proteome</keyword>
<keyword id="KW-0808">Transferase</keyword>
<dbReference type="EC" id="2.3.1.47" evidence="1"/>
<dbReference type="EMBL" id="AM286690">
    <property type="protein sequence ID" value="CAL17667.1"/>
    <property type="molecule type" value="Genomic_DNA"/>
</dbReference>
<dbReference type="RefSeq" id="WP_011589495.1">
    <property type="nucleotide sequence ID" value="NC_008260.1"/>
</dbReference>
<dbReference type="SMR" id="Q0VMD1"/>
<dbReference type="STRING" id="393595.ABO_2219"/>
<dbReference type="KEGG" id="abo:ABO_2219"/>
<dbReference type="eggNOG" id="COG0156">
    <property type="taxonomic scope" value="Bacteria"/>
</dbReference>
<dbReference type="HOGENOM" id="CLU_015846_11_2_6"/>
<dbReference type="OrthoDB" id="9807157at2"/>
<dbReference type="UniPathway" id="UPA00078"/>
<dbReference type="Proteomes" id="UP000008871">
    <property type="component" value="Chromosome"/>
</dbReference>
<dbReference type="GO" id="GO:0008710">
    <property type="term" value="F:8-amino-7-oxononanoate synthase activity"/>
    <property type="evidence" value="ECO:0007669"/>
    <property type="project" value="UniProtKB-UniRule"/>
</dbReference>
<dbReference type="GO" id="GO:0030170">
    <property type="term" value="F:pyridoxal phosphate binding"/>
    <property type="evidence" value="ECO:0007669"/>
    <property type="project" value="UniProtKB-UniRule"/>
</dbReference>
<dbReference type="GO" id="GO:0009102">
    <property type="term" value="P:biotin biosynthetic process"/>
    <property type="evidence" value="ECO:0007669"/>
    <property type="project" value="UniProtKB-UniRule"/>
</dbReference>
<dbReference type="CDD" id="cd06454">
    <property type="entry name" value="KBL_like"/>
    <property type="match status" value="1"/>
</dbReference>
<dbReference type="Gene3D" id="3.90.1150.10">
    <property type="entry name" value="Aspartate Aminotransferase, domain 1"/>
    <property type="match status" value="1"/>
</dbReference>
<dbReference type="Gene3D" id="3.40.640.10">
    <property type="entry name" value="Type I PLP-dependent aspartate aminotransferase-like (Major domain)"/>
    <property type="match status" value="1"/>
</dbReference>
<dbReference type="HAMAP" id="MF_01693">
    <property type="entry name" value="BioF_aminotrans_2"/>
    <property type="match status" value="1"/>
</dbReference>
<dbReference type="InterPro" id="IPR001917">
    <property type="entry name" value="Aminotrans_II_pyridoxalP_BS"/>
</dbReference>
<dbReference type="InterPro" id="IPR004839">
    <property type="entry name" value="Aminotransferase_I/II_large"/>
</dbReference>
<dbReference type="InterPro" id="IPR050087">
    <property type="entry name" value="AON_synthase_class-II"/>
</dbReference>
<dbReference type="InterPro" id="IPR004723">
    <property type="entry name" value="AONS_Archaea/Proteobacteria"/>
</dbReference>
<dbReference type="InterPro" id="IPR022834">
    <property type="entry name" value="AONS_Proteobacteria"/>
</dbReference>
<dbReference type="InterPro" id="IPR015424">
    <property type="entry name" value="PyrdxlP-dep_Trfase"/>
</dbReference>
<dbReference type="InterPro" id="IPR015421">
    <property type="entry name" value="PyrdxlP-dep_Trfase_major"/>
</dbReference>
<dbReference type="InterPro" id="IPR015422">
    <property type="entry name" value="PyrdxlP-dep_Trfase_small"/>
</dbReference>
<dbReference type="NCBIfam" id="TIGR00858">
    <property type="entry name" value="bioF"/>
    <property type="match status" value="1"/>
</dbReference>
<dbReference type="PANTHER" id="PTHR13693:SF100">
    <property type="entry name" value="8-AMINO-7-OXONONANOATE SYNTHASE"/>
    <property type="match status" value="1"/>
</dbReference>
<dbReference type="PANTHER" id="PTHR13693">
    <property type="entry name" value="CLASS II AMINOTRANSFERASE/8-AMINO-7-OXONONANOATE SYNTHASE"/>
    <property type="match status" value="1"/>
</dbReference>
<dbReference type="Pfam" id="PF00155">
    <property type="entry name" value="Aminotran_1_2"/>
    <property type="match status" value="1"/>
</dbReference>
<dbReference type="SUPFAM" id="SSF53383">
    <property type="entry name" value="PLP-dependent transferases"/>
    <property type="match status" value="1"/>
</dbReference>
<dbReference type="PROSITE" id="PS00599">
    <property type="entry name" value="AA_TRANSFER_CLASS_2"/>
    <property type="match status" value="1"/>
</dbReference>
<proteinExistence type="inferred from homology"/>
<accession>Q0VMD1</accession>